<evidence type="ECO:0000269" key="1">
    <source>
    </source>
</evidence>
<evidence type="ECO:0000269" key="2">
    <source>
    </source>
</evidence>
<evidence type="ECO:0000305" key="3"/>
<evidence type="ECO:0000305" key="4">
    <source>
    </source>
</evidence>
<evidence type="ECO:0007744" key="5">
    <source>
        <dbReference type="PDB" id="2B7O"/>
    </source>
</evidence>
<evidence type="ECO:0007829" key="6">
    <source>
        <dbReference type="PDB" id="2YPO"/>
    </source>
</evidence>
<evidence type="ECO:0007829" key="7">
    <source>
        <dbReference type="PDB" id="3NUD"/>
    </source>
</evidence>
<evidence type="ECO:0007829" key="8">
    <source>
        <dbReference type="PDB" id="3NUE"/>
    </source>
</evidence>
<evidence type="ECO:0007829" key="9">
    <source>
        <dbReference type="PDB" id="3RZI"/>
    </source>
</evidence>
<evidence type="ECO:0007829" key="10">
    <source>
        <dbReference type="PDB" id="6PBJ"/>
    </source>
</evidence>
<comment type="function">
    <text evidence="1">Catalyzes an aldol-like condensation reaction between phosphoenolpyruvate (PEP) and D-erythrose 4-phosphate (E4P) to generate 3-deoxy-D-arabino-heptulosonate 7-phosphate (DAH7P) and inorganic phosphate.</text>
</comment>
<comment type="catalytic activity">
    <reaction evidence="1">
        <text>D-erythrose 4-phosphate + phosphoenolpyruvate + H2O = 7-phospho-2-dehydro-3-deoxy-D-arabino-heptonate + phosphate</text>
        <dbReference type="Rhea" id="RHEA:14717"/>
        <dbReference type="ChEBI" id="CHEBI:15377"/>
        <dbReference type="ChEBI" id="CHEBI:16897"/>
        <dbReference type="ChEBI" id="CHEBI:43474"/>
        <dbReference type="ChEBI" id="CHEBI:58394"/>
        <dbReference type="ChEBI" id="CHEBI:58702"/>
        <dbReference type="EC" id="2.5.1.54"/>
    </reaction>
    <physiologicalReaction direction="left-to-right" evidence="4">
        <dbReference type="Rhea" id="RHEA:14718"/>
    </physiologicalReaction>
</comment>
<comment type="cofactor">
    <cofactor evidence="1">
        <name>Mn(2+)</name>
        <dbReference type="ChEBI" id="CHEBI:29035"/>
    </cofactor>
    <cofactor evidence="1">
        <name>Co(2+)</name>
        <dbReference type="ChEBI" id="CHEBI:48828"/>
    </cofactor>
    <cofactor evidence="1">
        <name>Cd(2+)</name>
        <dbReference type="ChEBI" id="CHEBI:48775"/>
    </cofactor>
    <text evidence="1">Binds 1 divalent cation per subunit. The enzyme is active with manganese, cobalt or cadmium ions.</text>
</comment>
<comment type="activity regulation">
    <text evidence="1">Feedback inhibited by tryptophan, tyrosine, phenylalanine and chorismate.</text>
</comment>
<comment type="biophysicochemical properties">
    <kinetics>
        <KM evidence="1">25 uM for D-erythrose 4-phosphate (E4P)</KM>
        <KM evidence="1">37 uM for phosphoenolpyruvate (PEP)</KM>
        <text evidence="1">kcat is 3.1 sec(-1).</text>
    </kinetics>
</comment>
<comment type="pathway">
    <text evidence="4">Metabolic intermediate biosynthesis; chorismate biosynthesis; chorismate from D-erythrose 4-phosphate and phosphoenolpyruvate: step 1/7.</text>
</comment>
<comment type="subunit">
    <text evidence="1">Homodimer. Interacts with Rv0948c.</text>
</comment>
<comment type="interaction">
    <interactant intactId="EBI-5241825">
        <id>O53512</id>
    </interactant>
    <interactant intactId="EBI-5241850">
        <id>P9WIC1</id>
        <label>Rv0948c</label>
    </interactant>
    <organismsDiffer>false</organismsDiffer>
    <experiments>2</experiments>
</comment>
<comment type="mass spectrometry" mass="51827.0" method="MALDI" evidence="2"/>
<comment type="similarity">
    <text evidence="3">Belongs to the class-II DAHP synthase family.</text>
</comment>
<gene>
    <name type="primary">aroG</name>
    <name type="ordered locus">Rv2178c</name>
</gene>
<feature type="chain" id="PRO_0000414909" description="Phospho-2-dehydro-3-deoxyheptonate aldolase AroG">
    <location>
        <begin position="1"/>
        <end position="462"/>
    </location>
</feature>
<feature type="binding site" evidence="1 5">
    <location>
        <position position="87"/>
    </location>
    <ligand>
        <name>Mn(2+)</name>
        <dbReference type="ChEBI" id="CHEBI:29035"/>
    </ligand>
</feature>
<feature type="binding site" evidence="1 5">
    <location>
        <position position="126"/>
    </location>
    <ligand>
        <name>phosphoenolpyruvate</name>
        <dbReference type="ChEBI" id="CHEBI:58702"/>
    </ligand>
</feature>
<feature type="binding site" evidence="1 5">
    <location>
        <begin position="283"/>
        <end position="284"/>
    </location>
    <ligand>
        <name>phosphoenolpyruvate</name>
        <dbReference type="ChEBI" id="CHEBI:58702"/>
    </ligand>
</feature>
<feature type="binding site" evidence="1 5">
    <location>
        <position position="306"/>
    </location>
    <ligand>
        <name>phosphoenolpyruvate</name>
        <dbReference type="ChEBI" id="CHEBI:58702"/>
    </ligand>
</feature>
<feature type="binding site" evidence="1 5">
    <location>
        <position position="337"/>
    </location>
    <ligand>
        <name>phosphoenolpyruvate</name>
        <dbReference type="ChEBI" id="CHEBI:58702"/>
    </ligand>
</feature>
<feature type="binding site" evidence="1 5">
    <location>
        <position position="369"/>
    </location>
    <ligand>
        <name>Mn(2+)</name>
        <dbReference type="ChEBI" id="CHEBI:29035"/>
    </ligand>
</feature>
<feature type="binding site" evidence="1 5">
    <location>
        <position position="411"/>
    </location>
    <ligand>
        <name>Mn(2+)</name>
        <dbReference type="ChEBI" id="CHEBI:29035"/>
    </ligand>
</feature>
<feature type="binding site" evidence="1 5">
    <location>
        <position position="441"/>
    </location>
    <ligand>
        <name>Mn(2+)</name>
        <dbReference type="ChEBI" id="CHEBI:29035"/>
    </ligand>
</feature>
<feature type="turn" evidence="10">
    <location>
        <begin position="1"/>
        <end position="3"/>
    </location>
</feature>
<feature type="strand" evidence="10">
    <location>
        <begin position="4"/>
        <end position="8"/>
    </location>
</feature>
<feature type="helix" evidence="10">
    <location>
        <begin position="20"/>
        <end position="30"/>
    </location>
</feature>
<feature type="helix" evidence="10">
    <location>
        <begin position="42"/>
        <end position="52"/>
    </location>
</feature>
<feature type="helix" evidence="10">
    <location>
        <begin position="61"/>
        <end position="75"/>
    </location>
</feature>
<feature type="strand" evidence="10">
    <location>
        <begin position="78"/>
        <end position="85"/>
    </location>
</feature>
<feature type="helix" evidence="6">
    <location>
        <begin position="91"/>
        <end position="93"/>
    </location>
</feature>
<feature type="helix" evidence="10">
    <location>
        <begin position="96"/>
        <end position="117"/>
    </location>
</feature>
<feature type="strand" evidence="10">
    <location>
        <begin position="121"/>
        <end position="126"/>
    </location>
</feature>
<feature type="strand" evidence="10">
    <location>
        <begin position="143"/>
        <end position="145"/>
    </location>
</feature>
<feature type="turn" evidence="10">
    <location>
        <begin position="150"/>
        <end position="152"/>
    </location>
</feature>
<feature type="strand" evidence="10">
    <location>
        <begin position="155"/>
        <end position="158"/>
    </location>
</feature>
<feature type="helix" evidence="10">
    <location>
        <begin position="159"/>
        <end position="162"/>
    </location>
</feature>
<feature type="helix" evidence="10">
    <location>
        <begin position="167"/>
        <end position="187"/>
    </location>
</feature>
<feature type="helix" evidence="10">
    <location>
        <begin position="190"/>
        <end position="192"/>
    </location>
</feature>
<feature type="helix" evidence="10">
    <location>
        <begin position="194"/>
        <end position="196"/>
    </location>
</feature>
<feature type="helix" evidence="10">
    <location>
        <begin position="197"/>
        <end position="207"/>
    </location>
</feature>
<feature type="strand" evidence="8">
    <location>
        <begin position="208"/>
        <end position="210"/>
    </location>
</feature>
<feature type="helix" evidence="10">
    <location>
        <begin position="211"/>
        <end position="213"/>
    </location>
</feature>
<feature type="helix" evidence="10">
    <location>
        <begin position="215"/>
        <end position="230"/>
    </location>
</feature>
<feature type="helix" evidence="10">
    <location>
        <begin position="235"/>
        <end position="237"/>
    </location>
</feature>
<feature type="strand" evidence="10">
    <location>
        <begin position="243"/>
        <end position="248"/>
    </location>
</feature>
<feature type="helix" evidence="10">
    <location>
        <begin position="252"/>
        <end position="257"/>
    </location>
</feature>
<feature type="strand" evidence="10">
    <location>
        <begin position="259"/>
        <end position="262"/>
    </location>
</feature>
<feature type="strand" evidence="9">
    <location>
        <begin position="265"/>
        <end position="268"/>
    </location>
</feature>
<feature type="strand" evidence="10">
    <location>
        <begin position="270"/>
        <end position="273"/>
    </location>
</feature>
<feature type="strand" evidence="10">
    <location>
        <begin position="277"/>
        <end position="281"/>
    </location>
</feature>
<feature type="turn" evidence="10">
    <location>
        <begin position="283"/>
        <end position="285"/>
    </location>
</feature>
<feature type="helix" evidence="10">
    <location>
        <begin position="291"/>
        <end position="298"/>
    </location>
</feature>
<feature type="strand" evidence="10">
    <location>
        <begin position="303"/>
        <end position="307"/>
    </location>
</feature>
<feature type="helix" evidence="10">
    <location>
        <begin position="313"/>
        <end position="323"/>
    </location>
</feature>
<feature type="strand" evidence="10">
    <location>
        <begin position="331"/>
        <end position="336"/>
    </location>
</feature>
<feature type="helix" evidence="10">
    <location>
        <begin position="340"/>
        <end position="355"/>
    </location>
</feature>
<feature type="turn" evidence="10">
    <location>
        <begin position="356"/>
        <end position="358"/>
    </location>
</feature>
<feature type="strand" evidence="10">
    <location>
        <begin position="362"/>
        <end position="365"/>
    </location>
</feature>
<feature type="turn" evidence="7">
    <location>
        <begin position="367"/>
        <end position="369"/>
    </location>
</feature>
<feature type="strand" evidence="9">
    <location>
        <begin position="371"/>
        <end position="374"/>
    </location>
</feature>
<feature type="strand" evidence="9">
    <location>
        <begin position="380"/>
        <end position="383"/>
    </location>
</feature>
<feature type="helix" evidence="10">
    <location>
        <begin position="384"/>
        <end position="401"/>
    </location>
</feature>
<feature type="strand" evidence="10">
    <location>
        <begin position="407"/>
        <end position="412"/>
    </location>
</feature>
<feature type="strand" evidence="10">
    <location>
        <begin position="420"/>
        <end position="422"/>
    </location>
</feature>
<feature type="turn" evidence="10">
    <location>
        <begin position="423"/>
        <end position="426"/>
    </location>
</feature>
<feature type="helix" evidence="9">
    <location>
        <begin position="431"/>
        <end position="433"/>
    </location>
</feature>
<feature type="strand" evidence="10">
    <location>
        <begin position="439"/>
        <end position="441"/>
    </location>
</feature>
<feature type="helix" evidence="10">
    <location>
        <begin position="446"/>
        <end position="461"/>
    </location>
</feature>
<proteinExistence type="evidence at protein level"/>
<reference key="1">
    <citation type="journal article" date="1998" name="Nature">
        <title>Deciphering the biology of Mycobacterium tuberculosis from the complete genome sequence.</title>
        <authorList>
            <person name="Cole S.T."/>
            <person name="Brosch R."/>
            <person name="Parkhill J."/>
            <person name="Garnier T."/>
            <person name="Churcher C.M."/>
            <person name="Harris D.E."/>
            <person name="Gordon S.V."/>
            <person name="Eiglmeier K."/>
            <person name="Gas S."/>
            <person name="Barry C.E. III"/>
            <person name="Tekaia F."/>
            <person name="Badcock K."/>
            <person name="Basham D."/>
            <person name="Brown D."/>
            <person name="Chillingworth T."/>
            <person name="Connor R."/>
            <person name="Davies R.M."/>
            <person name="Devlin K."/>
            <person name="Feltwell T."/>
            <person name="Gentles S."/>
            <person name="Hamlin N."/>
            <person name="Holroyd S."/>
            <person name="Hornsby T."/>
            <person name="Jagels K."/>
            <person name="Krogh A."/>
            <person name="McLean J."/>
            <person name="Moule S."/>
            <person name="Murphy L.D."/>
            <person name="Oliver S."/>
            <person name="Osborne J."/>
            <person name="Quail M.A."/>
            <person name="Rajandream M.A."/>
            <person name="Rogers J."/>
            <person name="Rutter S."/>
            <person name="Seeger K."/>
            <person name="Skelton S."/>
            <person name="Squares S."/>
            <person name="Squares R."/>
            <person name="Sulston J.E."/>
            <person name="Taylor K."/>
            <person name="Whitehead S."/>
            <person name="Barrell B.G."/>
        </authorList>
    </citation>
    <scope>NUCLEOTIDE SEQUENCE [LARGE SCALE GENOMIC DNA]</scope>
    <source>
        <strain>ATCC 25618 / H37Rv</strain>
    </source>
</reference>
<reference key="2">
    <citation type="journal article" date="2011" name="Mol. Cell. Proteomics">
        <title>Proteogenomic analysis of Mycobacterium tuberculosis by high resolution mass spectrometry.</title>
        <authorList>
            <person name="Kelkar D.S."/>
            <person name="Kumar D."/>
            <person name="Kumar P."/>
            <person name="Balakrishnan L."/>
            <person name="Muthusamy B."/>
            <person name="Yadav A.K."/>
            <person name="Shrivastava P."/>
            <person name="Marimuthu A."/>
            <person name="Anand S."/>
            <person name="Sundaram H."/>
            <person name="Kingsbury R."/>
            <person name="Harsha H.C."/>
            <person name="Nair B."/>
            <person name="Prasad T.S."/>
            <person name="Chauhan D.S."/>
            <person name="Katoch K."/>
            <person name="Katoch V.M."/>
            <person name="Kumar P."/>
            <person name="Chaerkady R."/>
            <person name="Ramachandran S."/>
            <person name="Dash D."/>
            <person name="Pandey A."/>
        </authorList>
    </citation>
    <scope>IDENTIFICATION BY MASS SPECTROMETRY [LARGE SCALE ANALYSIS]</scope>
    <source>
        <strain>ATCC 25618 / H37Rv</strain>
    </source>
</reference>
<reference evidence="5" key="3">
    <citation type="journal article" date="2005" name="J. Mol. Biol.">
        <title>The structure of 3-deoxy-d-arabino-heptulosonate 7-phosphate synthase from Mycobacterium tuberculosis reveals a common catalytic scaffold and ancestry for type I and type II enzymes.</title>
        <authorList>
            <person name="Webby C.J."/>
            <person name="Baker H.M."/>
            <person name="Lott J.S."/>
            <person name="Baker E.N."/>
            <person name="Parker E.J."/>
        </authorList>
    </citation>
    <scope>X-RAY CRYSTALLOGRAPHY (2.30 ANGSTROMS) IN COMPLEX WITH PHOSPHOENOLPYRUVATE AND MANGANESE IONS</scope>
    <scope>FUNCTION</scope>
    <scope>CATALYTIC ACTIVITY</scope>
    <scope>BIOPHYSICOCHEMICAL PROPERTIES</scope>
    <scope>ACTIVITY REGULATION</scope>
    <scope>COFACTOR</scope>
    <scope>SUBUNIT</scope>
    <source>
        <strain>ATCC 25618 / H37Rv</strain>
    </source>
</reference>
<reference key="4">
    <citation type="journal article" date="2009" name="EMBO J.">
        <title>Structure and function of a complex between chorismate mutase and DAHP synthase: efficiency boost for the junior partner.</title>
        <authorList>
            <person name="Sasso S."/>
            <person name="Okvist M."/>
            <person name="Roderer K."/>
            <person name="Gamper M."/>
            <person name="Codoni G."/>
            <person name="Krengel U."/>
            <person name="Kast P."/>
        </authorList>
    </citation>
    <scope>X-RAY CRYSTALLOGRAPHY (2.15 ANGSTROMS)</scope>
    <scope>MASS SPECTROMETRY</scope>
    <source>
        <strain>ATCC 25618 / H37Rv</strain>
    </source>
</reference>
<reference key="5">
    <citation type="submission" date="2009-10" db="PDB data bank">
        <title>Synergistic inhibition of the first enzyme of the shikimate pathway by combinations of aromatic amino acids.</title>
        <authorList>
            <person name="Webby C.J."/>
            <person name="Jiao W."/>
            <person name="Hutton R.D."/>
            <person name="Baker H.M."/>
            <person name="Baker E.N."/>
            <person name="Jameson G.B."/>
            <person name="Parker E.J."/>
        </authorList>
    </citation>
    <scope>X-RAY CRYSTALLOGRAPHY (2.00 ANGSTROMS)</scope>
</reference>
<reference key="6">
    <citation type="submission" date="2010-07" db="PDB data bank">
        <title>Synergistic allostery of the first enzyme of the shikimate pathway reveals a sophisticated regulatory network for the control of a branched biosynthetic pathway.</title>
        <authorList>
            <person name="Webby C.J."/>
            <person name="Jiao W."/>
            <person name="Hutton R.D."/>
            <person name="Baker H.M."/>
            <person name="Baker E.N."/>
            <person name="Jameson G.B."/>
            <person name="Parker E.J."/>
        </authorList>
    </citation>
    <scope>X-RAY CRYSTALLOGRAPHY (3.00 ANGSTROMS)</scope>
</reference>
<reference key="7">
    <citation type="submission" date="2010-10" db="PDB data bank">
        <title>Potent inhibitors of a shikimate pathway enzyme from mycobacterium tuberculosis combining mechanism- and modeling based design.</title>
        <authorList>
            <person name="Reichau S."/>
            <person name="Jiao W."/>
            <person name="Walker S.R."/>
            <person name="Hutton R.D."/>
            <person name="Parker E.J."/>
        </authorList>
    </citation>
    <scope>X-RAY CRYSTALLOGRAPHY (2.35 ANGSTROMS)</scope>
</reference>
<dbReference type="EC" id="2.5.1.54" evidence="1"/>
<dbReference type="EMBL" id="AL123456">
    <property type="protein sequence ID" value="CCP44955.1"/>
    <property type="molecule type" value="Genomic_DNA"/>
</dbReference>
<dbReference type="PIR" id="D70936">
    <property type="entry name" value="D70936"/>
</dbReference>
<dbReference type="RefSeq" id="NP_216694.1">
    <property type="nucleotide sequence ID" value="NC_000962.3"/>
</dbReference>
<dbReference type="RefSeq" id="WP_003911784.1">
    <property type="nucleotide sequence ID" value="NZ_NVQJ01000008.1"/>
</dbReference>
<dbReference type="PDB" id="2B7O">
    <property type="method" value="X-ray"/>
    <property type="resolution" value="2.30 A"/>
    <property type="chains" value="A/B=1-462"/>
</dbReference>
<dbReference type="PDB" id="2W19">
    <property type="method" value="X-ray"/>
    <property type="resolution" value="2.15 A"/>
    <property type="chains" value="A/B=1-462"/>
</dbReference>
<dbReference type="PDB" id="2W1A">
    <property type="method" value="X-ray"/>
    <property type="resolution" value="2.35 A"/>
    <property type="chains" value="A/B=1-462"/>
</dbReference>
<dbReference type="PDB" id="2YPO">
    <property type="method" value="X-ray"/>
    <property type="resolution" value="2.00 A"/>
    <property type="chains" value="A/B=1-462"/>
</dbReference>
<dbReference type="PDB" id="2YPP">
    <property type="method" value="X-ray"/>
    <property type="resolution" value="2.30 A"/>
    <property type="chains" value="A/B=1-462"/>
</dbReference>
<dbReference type="PDB" id="2YPQ">
    <property type="method" value="X-ray"/>
    <property type="resolution" value="2.76 A"/>
    <property type="chains" value="A/B=1-462"/>
</dbReference>
<dbReference type="PDB" id="3KGF">
    <property type="method" value="X-ray"/>
    <property type="resolution" value="2.00 A"/>
    <property type="chains" value="A/B=1-462"/>
</dbReference>
<dbReference type="PDB" id="3NUD">
    <property type="method" value="X-ray"/>
    <property type="resolution" value="3.00 A"/>
    <property type="chains" value="A/B=1-462"/>
</dbReference>
<dbReference type="PDB" id="3NUE">
    <property type="method" value="X-ray"/>
    <property type="resolution" value="2.50 A"/>
    <property type="chains" value="A/B=1-462"/>
</dbReference>
<dbReference type="PDB" id="3NV8">
    <property type="method" value="X-ray"/>
    <property type="resolution" value="2.25 A"/>
    <property type="chains" value="A/B=1-462"/>
</dbReference>
<dbReference type="PDB" id="3PFP">
    <property type="method" value="X-ray"/>
    <property type="resolution" value="2.35 A"/>
    <property type="chains" value="A/B=1-462"/>
</dbReference>
<dbReference type="PDB" id="3RZI">
    <property type="method" value="X-ray"/>
    <property type="resolution" value="1.95 A"/>
    <property type="chains" value="A/B=1-462"/>
</dbReference>
<dbReference type="PDB" id="5CKV">
    <property type="method" value="X-ray"/>
    <property type="resolution" value="2.79 A"/>
    <property type="chains" value="A/B=1-462"/>
</dbReference>
<dbReference type="PDB" id="5CKX">
    <property type="method" value="X-ray"/>
    <property type="resolution" value="2.70 A"/>
    <property type="chains" value="A/B=1-462"/>
</dbReference>
<dbReference type="PDB" id="5E2L">
    <property type="method" value="X-ray"/>
    <property type="resolution" value="2.50 A"/>
    <property type="chains" value="A/B=1-462"/>
</dbReference>
<dbReference type="PDB" id="5E40">
    <property type="method" value="X-ray"/>
    <property type="resolution" value="2.05 A"/>
    <property type="chains" value="A/B=1-462"/>
</dbReference>
<dbReference type="PDB" id="5E4N">
    <property type="method" value="X-ray"/>
    <property type="resolution" value="2.05 A"/>
    <property type="chains" value="A/B=1-462"/>
</dbReference>
<dbReference type="PDB" id="5E5G">
    <property type="method" value="X-ray"/>
    <property type="resolution" value="1.95 A"/>
    <property type="chains" value="A/B=1-462"/>
</dbReference>
<dbReference type="PDB" id="5E7Z">
    <property type="method" value="X-ray"/>
    <property type="resolution" value="2.40 A"/>
    <property type="chains" value="A/B=1-462"/>
</dbReference>
<dbReference type="PDB" id="5EX4">
    <property type="method" value="X-ray"/>
    <property type="resolution" value="2.25 A"/>
    <property type="chains" value="A/B=1-462"/>
</dbReference>
<dbReference type="PDB" id="6PBJ">
    <property type="method" value="X-ray"/>
    <property type="resolution" value="1.90 A"/>
    <property type="chains" value="A/B=1-462"/>
</dbReference>
<dbReference type="PDBsum" id="2B7O"/>
<dbReference type="PDBsum" id="2W19"/>
<dbReference type="PDBsum" id="2W1A"/>
<dbReference type="PDBsum" id="2YPO"/>
<dbReference type="PDBsum" id="2YPP"/>
<dbReference type="PDBsum" id="2YPQ"/>
<dbReference type="PDBsum" id="3KGF"/>
<dbReference type="PDBsum" id="3NUD"/>
<dbReference type="PDBsum" id="3NUE"/>
<dbReference type="PDBsum" id="3NV8"/>
<dbReference type="PDBsum" id="3PFP"/>
<dbReference type="PDBsum" id="3RZI"/>
<dbReference type="PDBsum" id="5CKV"/>
<dbReference type="PDBsum" id="5CKX"/>
<dbReference type="PDBsum" id="5E2L"/>
<dbReference type="PDBsum" id="5E40"/>
<dbReference type="PDBsum" id="5E4N"/>
<dbReference type="PDBsum" id="5E5G"/>
<dbReference type="PDBsum" id="5E7Z"/>
<dbReference type="PDBsum" id="5EX4"/>
<dbReference type="PDBsum" id="6PBJ"/>
<dbReference type="SMR" id="O53512"/>
<dbReference type="FunCoup" id="O53512">
    <property type="interactions" value="310"/>
</dbReference>
<dbReference type="IntAct" id="O53512">
    <property type="interactions" value="1"/>
</dbReference>
<dbReference type="MINT" id="O53512"/>
<dbReference type="STRING" id="83332.Rv2178c"/>
<dbReference type="PaxDb" id="83332-Rv2178c"/>
<dbReference type="DNASU" id="888309"/>
<dbReference type="GeneID" id="888309"/>
<dbReference type="KEGG" id="mtu:Rv2178c"/>
<dbReference type="KEGG" id="mtv:RVBD_2178c"/>
<dbReference type="TubercuList" id="Rv2178c"/>
<dbReference type="eggNOG" id="COG3200">
    <property type="taxonomic scope" value="Bacteria"/>
</dbReference>
<dbReference type="InParanoid" id="O53512"/>
<dbReference type="OrthoDB" id="9766852at2"/>
<dbReference type="PhylomeDB" id="O53512"/>
<dbReference type="BRENDA" id="2.5.1.54">
    <property type="organism ID" value="3445"/>
</dbReference>
<dbReference type="Reactome" id="R-MTU-964903">
    <property type="pathway name" value="Chorismate via Shikimate Pathway"/>
</dbReference>
<dbReference type="SABIO-RK" id="O53512"/>
<dbReference type="UniPathway" id="UPA00053">
    <property type="reaction ID" value="UER00084"/>
</dbReference>
<dbReference type="EvolutionaryTrace" id="O53512"/>
<dbReference type="PRO" id="PR:O53512"/>
<dbReference type="Proteomes" id="UP000001584">
    <property type="component" value="Chromosome"/>
</dbReference>
<dbReference type="GO" id="GO:0005829">
    <property type="term" value="C:cytosol"/>
    <property type="evidence" value="ECO:0000304"/>
    <property type="project" value="Reactome"/>
</dbReference>
<dbReference type="GO" id="GO:0009274">
    <property type="term" value="C:peptidoglycan-based cell wall"/>
    <property type="evidence" value="ECO:0007005"/>
    <property type="project" value="MTBBASE"/>
</dbReference>
<dbReference type="GO" id="GO:0005886">
    <property type="term" value="C:plasma membrane"/>
    <property type="evidence" value="ECO:0007005"/>
    <property type="project" value="MTBBASE"/>
</dbReference>
<dbReference type="GO" id="GO:0003849">
    <property type="term" value="F:3-deoxy-7-phosphoheptulonate synthase activity"/>
    <property type="evidence" value="ECO:0000314"/>
    <property type="project" value="MTBBASE"/>
</dbReference>
<dbReference type="GO" id="GO:0030145">
    <property type="term" value="F:manganese ion binding"/>
    <property type="evidence" value="ECO:0000314"/>
    <property type="project" value="MTBBASE"/>
</dbReference>
<dbReference type="GO" id="GO:0008652">
    <property type="term" value="P:amino acid biosynthetic process"/>
    <property type="evidence" value="ECO:0007669"/>
    <property type="project" value="UniProtKB-KW"/>
</dbReference>
<dbReference type="GO" id="GO:0009073">
    <property type="term" value="P:aromatic amino acid family biosynthetic process"/>
    <property type="evidence" value="ECO:0007669"/>
    <property type="project" value="UniProtKB-KW"/>
</dbReference>
<dbReference type="GO" id="GO:0009423">
    <property type="term" value="P:chorismate biosynthetic process"/>
    <property type="evidence" value="ECO:0007669"/>
    <property type="project" value="UniProtKB-UniPathway"/>
</dbReference>
<dbReference type="GO" id="GO:0051260">
    <property type="term" value="P:protein homooligomerization"/>
    <property type="evidence" value="ECO:0000353"/>
    <property type="project" value="MTBBASE"/>
</dbReference>
<dbReference type="FunFam" id="3.20.20.70:FF:000128">
    <property type="entry name" value="Phospho-2-dehydro-3-deoxyheptonate aldolase"/>
    <property type="match status" value="1"/>
</dbReference>
<dbReference type="FunFam" id="3.20.20.70:FF:000139">
    <property type="entry name" value="Phospho-2-dehydro-3-deoxyheptonate aldolase"/>
    <property type="match status" value="1"/>
</dbReference>
<dbReference type="Gene3D" id="3.20.20.70">
    <property type="entry name" value="Aldolase class I"/>
    <property type="match status" value="2"/>
</dbReference>
<dbReference type="InterPro" id="IPR013785">
    <property type="entry name" value="Aldolase_TIM"/>
</dbReference>
<dbReference type="InterPro" id="IPR002480">
    <property type="entry name" value="DAHP_synth_2"/>
</dbReference>
<dbReference type="NCBIfam" id="TIGR01358">
    <property type="entry name" value="DAHP_synth_II"/>
    <property type="match status" value="1"/>
</dbReference>
<dbReference type="PANTHER" id="PTHR21337:SF0">
    <property type="entry name" value="PHOSPHO-2-DEHYDRO-3-DEOXYHEPTONATE ALDOLASE"/>
    <property type="match status" value="1"/>
</dbReference>
<dbReference type="PANTHER" id="PTHR21337">
    <property type="entry name" value="PHOSPHO-2-DEHYDRO-3-DEOXYHEPTONATE ALDOLASE 1, 2"/>
    <property type="match status" value="1"/>
</dbReference>
<dbReference type="Pfam" id="PF01474">
    <property type="entry name" value="DAHP_synth_2"/>
    <property type="match status" value="1"/>
</dbReference>
<dbReference type="SUPFAM" id="SSF51569">
    <property type="entry name" value="Aldolase"/>
    <property type="match status" value="1"/>
</dbReference>
<sequence length="462" mass="50641">MNWTVDIPIDQLPSLPPLPTDLRTRLDAALAKPAAQQPTWPADQALAMRTVLESVPPVTVPSEIVRLQEQLAQVAKGEAFLLQGGDCAETFMDNTEPHIRGNVRALLQMAVVLTYGASMPVVKVARIAGQYAKPRSADIDALGLRSYRGDMINGFAPDAAAREHDPSRLVRAYANASAAMNLVRALTSSGLASLHLVHDWNREFVRTSPAGARYEALATEIDRGLRFMSACGVADRNLQTAEIYASHEALVLDYERAMLRLSDGDDGEPQLFDLSAHTVWIGERTRQIDGAHIAFAQVIANPVGVKLGPNMTPELAVEYVERLDPHNKPGRLTLVSRMGNHKVRDLLPPIVEKVQATGHQVIWQCDPMHGNTHESSTGFKTRHFDRIVDEVQGFFEVHRALGTHPGGIHVEITGENVTECLGGAQDISETDLAGRYETACDPRLNTQQSLELAFLVAEMLRD</sequence>
<accession>O53512</accession>
<accession>L0T926</accession>
<protein>
    <recommendedName>
        <fullName>Phospho-2-dehydro-3-deoxyheptonate aldolase AroG</fullName>
        <ecNumber evidence="1">2.5.1.54</ecNumber>
    </recommendedName>
    <alternativeName>
        <fullName>3-deoxy-D-arabino-heptulosonate 7-phosphate synthase</fullName>
    </alternativeName>
    <alternativeName>
        <fullName>DAHP synthase</fullName>
    </alternativeName>
    <alternativeName>
        <fullName>Phospho-2-keto-3-deoxyheptonate aldolase</fullName>
    </alternativeName>
</protein>
<name>AROG_MYCTU</name>
<organism>
    <name type="scientific">Mycobacterium tuberculosis (strain ATCC 25618 / H37Rv)</name>
    <dbReference type="NCBI Taxonomy" id="83332"/>
    <lineage>
        <taxon>Bacteria</taxon>
        <taxon>Bacillati</taxon>
        <taxon>Actinomycetota</taxon>
        <taxon>Actinomycetes</taxon>
        <taxon>Mycobacteriales</taxon>
        <taxon>Mycobacteriaceae</taxon>
        <taxon>Mycobacterium</taxon>
        <taxon>Mycobacterium tuberculosis complex</taxon>
    </lineage>
</organism>
<keyword id="KW-0002">3D-structure</keyword>
<keyword id="KW-0028">Amino-acid biosynthesis</keyword>
<keyword id="KW-0057">Aromatic amino acid biosynthesis</keyword>
<keyword id="KW-0104">Cadmium</keyword>
<keyword id="KW-0170">Cobalt</keyword>
<keyword id="KW-0464">Manganese</keyword>
<keyword id="KW-0479">Metal-binding</keyword>
<keyword id="KW-1185">Reference proteome</keyword>
<keyword id="KW-0808">Transferase</keyword>